<proteinExistence type="inferred from homology"/>
<comment type="cofactor">
    <cofactor evidence="1">
        <name>Zn(2+)</name>
        <dbReference type="ChEBI" id="CHEBI:29105"/>
    </cofactor>
    <text evidence="1">Binds 3 Zn(2+) ions per subunit.</text>
</comment>
<comment type="similarity">
    <text evidence="1">Belongs to the PHP family.</text>
</comment>
<sequence length="245" mass="27147">MKLVLDTHTHTISSGHAYSTITENAREAYKKGLQLICMTDHGPKMPGAAHLWYFGNLKVLPEKIEGVEILKGVEVNIMDEEGNLDLPEGILKKLDIVIASLHDVCFEPSDDIERNTKAIINAIKNPYVDIIGHPGNPIYPIDIEKVLMAAKEYGKFIEINNSSFVSSRKGSEENCFLIAKKAKEMGVKIAVGSDAHVSFDVGRFEEALKVIKNAGITEDLVLNTDVGKIKEYLKEKKRKIGGEEE</sequence>
<feature type="chain" id="PRO_0000382658" description="Probable phosphatase Teth514_1060">
    <location>
        <begin position="1"/>
        <end position="245"/>
    </location>
</feature>
<feature type="binding site" evidence="1">
    <location>
        <position position="8"/>
    </location>
    <ligand>
        <name>Zn(2+)</name>
        <dbReference type="ChEBI" id="CHEBI:29105"/>
        <label>1</label>
    </ligand>
</feature>
<feature type="binding site" evidence="1">
    <location>
        <position position="10"/>
    </location>
    <ligand>
        <name>Zn(2+)</name>
        <dbReference type="ChEBI" id="CHEBI:29105"/>
        <label>1</label>
    </ligand>
</feature>
<feature type="binding site" evidence="1">
    <location>
        <position position="16"/>
    </location>
    <ligand>
        <name>Zn(2+)</name>
        <dbReference type="ChEBI" id="CHEBI:29105"/>
        <label>2</label>
    </ligand>
</feature>
<feature type="binding site" evidence="1">
    <location>
        <position position="41"/>
    </location>
    <ligand>
        <name>Zn(2+)</name>
        <dbReference type="ChEBI" id="CHEBI:29105"/>
        <label>2</label>
    </ligand>
</feature>
<feature type="binding site" evidence="1">
    <location>
        <position position="74"/>
    </location>
    <ligand>
        <name>Zn(2+)</name>
        <dbReference type="ChEBI" id="CHEBI:29105"/>
        <label>1</label>
    </ligand>
</feature>
<feature type="binding site" evidence="1">
    <location>
        <position position="74"/>
    </location>
    <ligand>
        <name>Zn(2+)</name>
        <dbReference type="ChEBI" id="CHEBI:29105"/>
        <label>3</label>
    </ligand>
</feature>
<feature type="binding site" evidence="1">
    <location>
        <position position="102"/>
    </location>
    <ligand>
        <name>Zn(2+)</name>
        <dbReference type="ChEBI" id="CHEBI:29105"/>
        <label>3</label>
    </ligand>
</feature>
<feature type="binding site" evidence="1">
    <location>
        <position position="133"/>
    </location>
    <ligand>
        <name>Zn(2+)</name>
        <dbReference type="ChEBI" id="CHEBI:29105"/>
        <label>3</label>
    </ligand>
</feature>
<feature type="binding site" evidence="1">
    <location>
        <position position="194"/>
    </location>
    <ligand>
        <name>Zn(2+)</name>
        <dbReference type="ChEBI" id="CHEBI:29105"/>
        <label>1</label>
    </ligand>
</feature>
<feature type="binding site" evidence="1">
    <location>
        <position position="196"/>
    </location>
    <ligand>
        <name>Zn(2+)</name>
        <dbReference type="ChEBI" id="CHEBI:29105"/>
        <label>2</label>
    </ligand>
</feature>
<dbReference type="EC" id="3.1.3.-" evidence="1"/>
<dbReference type="EMBL" id="CP000923">
    <property type="protein sequence ID" value="ABY92359.1"/>
    <property type="molecule type" value="Genomic_DNA"/>
</dbReference>
<dbReference type="RefSeq" id="WP_003866606.1">
    <property type="nucleotide sequence ID" value="NC_010320.1"/>
</dbReference>
<dbReference type="SMR" id="B0K683"/>
<dbReference type="KEGG" id="tex:Teth514_1060"/>
<dbReference type="HOGENOM" id="CLU_061999_0_1_9"/>
<dbReference type="Proteomes" id="UP000002155">
    <property type="component" value="Chromosome"/>
</dbReference>
<dbReference type="GO" id="GO:0005829">
    <property type="term" value="C:cytosol"/>
    <property type="evidence" value="ECO:0007669"/>
    <property type="project" value="TreeGrafter"/>
</dbReference>
<dbReference type="GO" id="GO:0016791">
    <property type="term" value="F:phosphatase activity"/>
    <property type="evidence" value="ECO:0007669"/>
    <property type="project" value="UniProtKB-UniRule"/>
</dbReference>
<dbReference type="GO" id="GO:0008270">
    <property type="term" value="F:zinc ion binding"/>
    <property type="evidence" value="ECO:0007669"/>
    <property type="project" value="UniProtKB-UniRule"/>
</dbReference>
<dbReference type="CDD" id="cd07437">
    <property type="entry name" value="PHP_HisPPase_Ycdx_like"/>
    <property type="match status" value="1"/>
</dbReference>
<dbReference type="Gene3D" id="3.20.20.140">
    <property type="entry name" value="Metal-dependent hydrolases"/>
    <property type="match status" value="1"/>
</dbReference>
<dbReference type="HAMAP" id="MF_01561">
    <property type="entry name" value="YcdX_phosphat"/>
    <property type="match status" value="1"/>
</dbReference>
<dbReference type="InterPro" id="IPR023710">
    <property type="entry name" value="Phosphatase_YcdX_put"/>
</dbReference>
<dbReference type="InterPro" id="IPR004013">
    <property type="entry name" value="PHP_dom"/>
</dbReference>
<dbReference type="InterPro" id="IPR050243">
    <property type="entry name" value="PHP_phosphatase"/>
</dbReference>
<dbReference type="InterPro" id="IPR003141">
    <property type="entry name" value="Pol/His_phosphatase_N"/>
</dbReference>
<dbReference type="InterPro" id="IPR016195">
    <property type="entry name" value="Pol/histidinol_Pase-like"/>
</dbReference>
<dbReference type="NCBIfam" id="NF006702">
    <property type="entry name" value="PRK09248.1"/>
    <property type="match status" value="1"/>
</dbReference>
<dbReference type="PANTHER" id="PTHR36928">
    <property type="entry name" value="PHOSPHATASE YCDX-RELATED"/>
    <property type="match status" value="1"/>
</dbReference>
<dbReference type="PANTHER" id="PTHR36928:SF1">
    <property type="entry name" value="PHOSPHATASE YCDX-RELATED"/>
    <property type="match status" value="1"/>
</dbReference>
<dbReference type="Pfam" id="PF02811">
    <property type="entry name" value="PHP"/>
    <property type="match status" value="1"/>
</dbReference>
<dbReference type="SMART" id="SM00481">
    <property type="entry name" value="POLIIIAc"/>
    <property type="match status" value="1"/>
</dbReference>
<dbReference type="SUPFAM" id="SSF89550">
    <property type="entry name" value="PHP domain-like"/>
    <property type="match status" value="1"/>
</dbReference>
<accession>B0K683</accession>
<organism>
    <name type="scientific">Thermoanaerobacter sp. (strain X514)</name>
    <dbReference type="NCBI Taxonomy" id="399726"/>
    <lineage>
        <taxon>Bacteria</taxon>
        <taxon>Bacillati</taxon>
        <taxon>Bacillota</taxon>
        <taxon>Clostridia</taxon>
        <taxon>Thermoanaerobacterales</taxon>
        <taxon>Thermoanaerobacteraceae</taxon>
        <taxon>Thermoanaerobacter</taxon>
    </lineage>
</organism>
<name>Y1060_THEPX</name>
<keyword id="KW-0378">Hydrolase</keyword>
<keyword id="KW-0479">Metal-binding</keyword>
<keyword id="KW-0862">Zinc</keyword>
<protein>
    <recommendedName>
        <fullName evidence="1">Probable phosphatase Teth514_1060</fullName>
        <ecNumber evidence="1">3.1.3.-</ecNumber>
    </recommendedName>
</protein>
<reference key="1">
    <citation type="submission" date="2008-01" db="EMBL/GenBank/DDBJ databases">
        <title>Complete sequence of Thermoanaerobacter sp. X514.</title>
        <authorList>
            <consortium name="US DOE Joint Genome Institute"/>
            <person name="Copeland A."/>
            <person name="Lucas S."/>
            <person name="Lapidus A."/>
            <person name="Barry K."/>
            <person name="Glavina del Rio T."/>
            <person name="Dalin E."/>
            <person name="Tice H."/>
            <person name="Pitluck S."/>
            <person name="Bruce D."/>
            <person name="Goodwin L."/>
            <person name="Saunders E."/>
            <person name="Brettin T."/>
            <person name="Detter J.C."/>
            <person name="Han C."/>
            <person name="Schmutz J."/>
            <person name="Larimer F."/>
            <person name="Land M."/>
            <person name="Hauser L."/>
            <person name="Kyrpides N."/>
            <person name="Kim E."/>
            <person name="Hemme C."/>
            <person name="Fields M.W."/>
            <person name="He Z."/>
            <person name="Zhou J."/>
            <person name="Richardson P."/>
        </authorList>
    </citation>
    <scope>NUCLEOTIDE SEQUENCE [LARGE SCALE GENOMIC DNA]</scope>
    <source>
        <strain>X514</strain>
    </source>
</reference>
<evidence type="ECO:0000255" key="1">
    <source>
        <dbReference type="HAMAP-Rule" id="MF_01561"/>
    </source>
</evidence>
<gene>
    <name type="ordered locus">Teth514_1060</name>
</gene>